<gene>
    <name evidence="5" type="primary">asR4</name>
</gene>
<sequence length="632" mass="68987">MPASLPGQDGGGTRTTRPRSQLRAACDSCNKSKTKCPGGNPCPLCQCSGIRCHYSVAHQLGRPKGSKNKRTLMREMQGSLGNGDASGQFQPNRIVTTAQAHISSNPSPVGSQSQQQQHPQQAGQQQQQQQQQQQQQHQQQQQQQQQQQQQQQQQQQQQQQQQQQQQQHQQQQQQQQQQQHLLPHAFSNTMQNAGTTAAYAGAEKEDSPLAMDDGELFSMLDQTLLMDTMTDEMSDFGQLVPQALPHPMTMPESLTSLLNHDTAFDATQLSNEYSTSSNSKPSTTDDSCMALPTPDSSTTHRPSSSVFGDGHITFSSGTASASRTSASSIVEQQSIPTSPVTVAPMSPAKSSSVPRTLPPATVTPTCTCLPGLVTLICQLEDLRHPPPPRHTSGQHPHQHPASPYSLKCILQGVQLAEEPWAGFARCLDAAGARKRHGAQENTVQDDDGNDHHRHALALYAMSIRIILSSIHKYRIALSMTGQQQRQHNFGDSPEDLDDAASVLVSVGGVQLAGETKSEMIKIAVRLALKQTTAALMRLLECRNRSSSAPSSATMQVAEYSVGHGRFESTAMVRDHPLPHSMSYSSLKTLAGPHTNMITGQDQLEKRENVAGMLSILQYTTKDLIDGANFDWR</sequence>
<keyword id="KW-0238">DNA-binding</keyword>
<keyword id="KW-0479">Metal-binding</keyword>
<keyword id="KW-0539">Nucleus</keyword>
<keyword id="KW-0804">Transcription</keyword>
<keyword id="KW-0805">Transcription regulation</keyword>
<reference key="1">
    <citation type="journal article" date="2018" name="Nat. Commun.">
        <title>Three previously unrecognised classes of biosynthetic enzymes revealed during the production of xenovulene A.</title>
        <authorList>
            <person name="Schor R."/>
            <person name="Schotte C."/>
            <person name="Wibberg D."/>
            <person name="Kalinowski J."/>
            <person name="Cox R.J."/>
        </authorList>
    </citation>
    <scope>NUCLEOTIDE SEQUENCE [GENOMIC DNA]</scope>
    <scope>INDUCTION</scope>
    <scope>FUNCTION</scope>
    <scope>DISRUPTION PHENOTYPE</scope>
</reference>
<reference key="2">
    <citation type="journal article" date="1997" name="J. Pharmacol. Exp. Ther.">
        <title>Regulation of neuronal and recombinant GABA(A) receptor ion channels by xenovulene A, a natural product isolated from Acremonium strictum.</title>
        <authorList>
            <person name="Thomas P."/>
            <person name="Sundaram H."/>
            <person name="Krishek B.J."/>
            <person name="Chazot P."/>
            <person name="Xie X."/>
            <person name="Bevan P."/>
            <person name="Brocchini S.J."/>
            <person name="Latham C.J."/>
            <person name="Charlton P."/>
            <person name="Moore M."/>
            <person name="Lewis S.J."/>
            <person name="Thornton D.M."/>
            <person name="Stephenson F.A."/>
            <person name="Smart T.G."/>
        </authorList>
    </citation>
    <scope>BIOTECHNOLOGY</scope>
</reference>
<reference key="3">
    <citation type="journal article" date="2007" name="Chem. Commun. (Camb.)">
        <title>Characterisation of 3-methylorcinaldehyde synthase (MOS) in Acremonium strictum: first observation of a reductive release mechanism during polyketide biosynthesis.</title>
        <authorList>
            <person name="Bailey A.M."/>
            <person name="Cox R.J."/>
            <person name="Harley K."/>
            <person name="Lazarus C.M."/>
            <person name="Simpson T.J."/>
            <person name="Skellam E."/>
        </authorList>
    </citation>
    <scope>FUNCTION</scope>
</reference>
<reference key="4">
    <citation type="journal article" date="2010" name="Chem. Commun. (Camb.)">
        <title>Catalytic role of the C-terminal domains of a fungal non-reducing polyketide synthase.</title>
        <authorList>
            <person name="Fisch K.M."/>
            <person name="Skellam E."/>
            <person name="Ivison D."/>
            <person name="Cox R.J."/>
            <person name="Bailey A.M."/>
            <person name="Lazarus C.M."/>
            <person name="Simpson T.J."/>
        </authorList>
    </citation>
    <scope>FUNCTION</scope>
</reference>
<comment type="function">
    <text evidence="3">Transcription factor; part of the gene cluster that mediates the biosynthesis of xenovulene A, an unusual meroterpenoid that has potent inhibitory effects on the human gamma-aminobutyrate A (GABAA) benzodiazepine receptor.</text>
</comment>
<comment type="subcellular location">
    <subcellularLocation>
        <location evidence="1">Nucleus</location>
    </subcellularLocation>
</comment>
<comment type="induction">
    <text evidence="3">Expression is significantly up-regulated under xenovulene A producing condition.</text>
</comment>
<comment type="disruption phenotype">
    <text evidence="3">Does not affect the production of xenovulene A.</text>
</comment>
<comment type="biotechnology">
    <text evidence="4">Xenovulene A is a natural product exhibiting little structural resemblance with classical benzodiazepines yet is able to displace high-affinity ligand binding to the benzodiazepine site of the gamma-aminobutyrate A (GABAA) receptor and could be potentially used as an anti-depressant with reduced addictive properties.</text>
</comment>
<organism>
    <name type="scientific">Sarocladium schorii</name>
    <name type="common">Acremonium strictum (strain IMI 501407)</name>
    <dbReference type="NCBI Taxonomy" id="2203296"/>
    <lineage>
        <taxon>Eukaryota</taxon>
        <taxon>Fungi</taxon>
        <taxon>Dikarya</taxon>
        <taxon>Ascomycota</taxon>
        <taxon>Pezizomycotina</taxon>
        <taxon>Sordariomycetes</taxon>
        <taxon>Hypocreomycetidae</taxon>
        <taxon>Hypocreales</taxon>
        <taxon>Sarocladiaceae</taxon>
        <taxon>Sarocladium</taxon>
    </lineage>
</organism>
<protein>
    <recommendedName>
        <fullName evidence="5">Transcription factor asR4</fullName>
    </recommendedName>
    <alternativeName>
        <fullName evidence="5">Xenovulene A biosynthesis cluster protein R4</fullName>
    </alternativeName>
</protein>
<accession>A0A2U8U2L8</accession>
<proteinExistence type="evidence at protein level"/>
<dbReference type="EMBL" id="MG736817">
    <property type="protein sequence ID" value="AWM95793.1"/>
    <property type="molecule type" value="Genomic_DNA"/>
</dbReference>
<dbReference type="SMR" id="A0A2U8U2L8"/>
<dbReference type="GO" id="GO:0005634">
    <property type="term" value="C:nucleus"/>
    <property type="evidence" value="ECO:0007669"/>
    <property type="project" value="UniProtKB-SubCell"/>
</dbReference>
<dbReference type="GO" id="GO:0003677">
    <property type="term" value="F:DNA binding"/>
    <property type="evidence" value="ECO:0007669"/>
    <property type="project" value="UniProtKB-KW"/>
</dbReference>
<dbReference type="GO" id="GO:0000981">
    <property type="term" value="F:DNA-binding transcription factor activity, RNA polymerase II-specific"/>
    <property type="evidence" value="ECO:0007669"/>
    <property type="project" value="InterPro"/>
</dbReference>
<dbReference type="GO" id="GO:0008270">
    <property type="term" value="F:zinc ion binding"/>
    <property type="evidence" value="ECO:0007669"/>
    <property type="project" value="InterPro"/>
</dbReference>
<dbReference type="CDD" id="cd00067">
    <property type="entry name" value="GAL4"/>
    <property type="match status" value="1"/>
</dbReference>
<dbReference type="Gene3D" id="4.10.240.10">
    <property type="entry name" value="Zn(2)-C6 fungal-type DNA-binding domain"/>
    <property type="match status" value="1"/>
</dbReference>
<dbReference type="InterPro" id="IPR036864">
    <property type="entry name" value="Zn2-C6_fun-type_DNA-bd_sf"/>
</dbReference>
<dbReference type="InterPro" id="IPR001138">
    <property type="entry name" value="Zn2Cys6_DnaBD"/>
</dbReference>
<dbReference type="PANTHER" id="PTHR35310">
    <property type="entry name" value="CELL WALL INTEGRITY/STRESS RESPONSE COMPONENT-LIKE PROTEIN"/>
    <property type="match status" value="1"/>
</dbReference>
<dbReference type="PANTHER" id="PTHR35310:SF1">
    <property type="entry name" value="CELL WALL INTEGRITY_STRESS RESPONSE COMPONENT-LIKE PROTEIN"/>
    <property type="match status" value="1"/>
</dbReference>
<dbReference type="Pfam" id="PF00172">
    <property type="entry name" value="Zn_clus"/>
    <property type="match status" value="1"/>
</dbReference>
<dbReference type="SUPFAM" id="SSF57701">
    <property type="entry name" value="Zn2/Cys6 DNA-binding domain"/>
    <property type="match status" value="1"/>
</dbReference>
<dbReference type="PROSITE" id="PS50048">
    <property type="entry name" value="ZN2_CY6_FUNGAL_2"/>
    <property type="match status" value="1"/>
</dbReference>
<name>ASR4_SARSH</name>
<feature type="chain" id="PRO_0000449190" description="Transcription factor asR4">
    <location>
        <begin position="1"/>
        <end position="632"/>
    </location>
</feature>
<feature type="DNA-binding region" description="Zn(2)-C6 fungal-type" evidence="1">
    <location>
        <begin position="26"/>
        <end position="52"/>
    </location>
</feature>
<feature type="region of interest" description="Disordered" evidence="2">
    <location>
        <begin position="101"/>
        <end position="129"/>
    </location>
</feature>
<feature type="region of interest" description="Disordered" evidence="2">
    <location>
        <begin position="270"/>
        <end position="311"/>
    </location>
</feature>
<feature type="region of interest" description="Disordered" evidence="2">
    <location>
        <begin position="324"/>
        <end position="356"/>
    </location>
</feature>
<feature type="compositionally biased region" description="Polar residues" evidence="2">
    <location>
        <begin position="101"/>
        <end position="111"/>
    </location>
</feature>
<feature type="compositionally biased region" description="Low complexity" evidence="2">
    <location>
        <begin position="112"/>
        <end position="129"/>
    </location>
</feature>
<feature type="compositionally biased region" description="Polar residues" evidence="2">
    <location>
        <begin position="270"/>
        <end position="286"/>
    </location>
</feature>
<feature type="compositionally biased region" description="Polar residues" evidence="2">
    <location>
        <begin position="294"/>
        <end position="306"/>
    </location>
</feature>
<feature type="compositionally biased region" description="Polar residues" evidence="2">
    <location>
        <begin position="329"/>
        <end position="340"/>
    </location>
</feature>
<evidence type="ECO:0000255" key="1">
    <source>
        <dbReference type="PROSITE-ProRule" id="PRU00227"/>
    </source>
</evidence>
<evidence type="ECO:0000256" key="2">
    <source>
        <dbReference type="SAM" id="MobiDB-lite"/>
    </source>
</evidence>
<evidence type="ECO:0000269" key="3">
    <source>
    </source>
</evidence>
<evidence type="ECO:0000269" key="4">
    <source>
    </source>
</evidence>
<evidence type="ECO:0000303" key="5">
    <source>
    </source>
</evidence>